<accession>O34380</accession>
<accession>Q7DL66</accession>
<dbReference type="EMBL" id="AB006424">
    <property type="protein sequence ID" value="BAA33081.1"/>
    <property type="molecule type" value="Genomic_DNA"/>
</dbReference>
<dbReference type="EMBL" id="AL009126">
    <property type="protein sequence ID" value="CAB11964.1"/>
    <property type="molecule type" value="Genomic_DNA"/>
</dbReference>
<dbReference type="PIR" id="H69745">
    <property type="entry name" value="H69745"/>
</dbReference>
<dbReference type="RefSeq" id="NP_388069.1">
    <property type="nucleotide sequence ID" value="NC_000964.3"/>
</dbReference>
<dbReference type="RefSeq" id="WP_003246482.1">
    <property type="nucleotide sequence ID" value="NZ_OZ025638.1"/>
</dbReference>
<dbReference type="SMR" id="O34380"/>
<dbReference type="FunCoup" id="O34380">
    <property type="interactions" value="25"/>
</dbReference>
<dbReference type="STRING" id="224308.BSU01880"/>
<dbReference type="PaxDb" id="224308-BSU01880"/>
<dbReference type="EnsemblBacteria" id="CAB11964">
    <property type="protein sequence ID" value="CAB11964"/>
    <property type="gene ID" value="BSU_01880"/>
</dbReference>
<dbReference type="GeneID" id="938568"/>
<dbReference type="KEGG" id="bsu:BSU01880"/>
<dbReference type="PATRIC" id="fig|224308.179.peg.193"/>
<dbReference type="eggNOG" id="COG5609">
    <property type="taxonomic scope" value="Bacteria"/>
</dbReference>
<dbReference type="InParanoid" id="O34380"/>
<dbReference type="OrthoDB" id="5422931at2"/>
<dbReference type="BioCyc" id="BSUB:BSU01880-MONOMER"/>
<dbReference type="Proteomes" id="UP000001570">
    <property type="component" value="Chromosome"/>
</dbReference>
<dbReference type="InterPro" id="IPR018745">
    <property type="entry name" value="MpsC"/>
</dbReference>
<dbReference type="Pfam" id="PF10057">
    <property type="entry name" value="MpsC"/>
    <property type="match status" value="1"/>
</dbReference>
<keyword id="KW-1185">Reference proteome</keyword>
<sequence>MKKSKGSIESEISKSITQWEKDYLGRGSVSVKTDILRDMIIVNLKGILTPAEYVVCGSKEGMLSIKQTRSELVESGIEGLKDIILKITGEKVKSFHTDLSSRTGERVMVFKLCNDLEKNLEKIL</sequence>
<organism>
    <name type="scientific">Bacillus subtilis (strain 168)</name>
    <dbReference type="NCBI Taxonomy" id="224308"/>
    <lineage>
        <taxon>Bacteria</taxon>
        <taxon>Bacillati</taxon>
        <taxon>Bacillota</taxon>
        <taxon>Bacilli</taxon>
        <taxon>Bacillales</taxon>
        <taxon>Bacillaceae</taxon>
        <taxon>Bacillus</taxon>
    </lineage>
</organism>
<name>YBCI_BACSU</name>
<feature type="chain" id="PRO_0000359958" description="Uncharacterized protein YbcI">
    <location>
        <begin position="1"/>
        <end position="124"/>
    </location>
</feature>
<proteinExistence type="predicted"/>
<gene>
    <name type="primary">ybcI</name>
    <name type="ordered locus">BSU01880</name>
</gene>
<protein>
    <recommendedName>
        <fullName>Uncharacterized protein YbcI</fullName>
    </recommendedName>
</protein>
<reference key="1">
    <citation type="submission" date="1997-07" db="EMBL/GenBank/DDBJ databases">
        <title>Sequence analysis of the 70kb region between 17 and 23 degree of the Bacillus subtilis chromosome.</title>
        <authorList>
            <person name="Haga K."/>
            <person name="Liu H."/>
            <person name="Yasumoto K."/>
            <person name="Takahashi H."/>
            <person name="Yoshikawa H."/>
        </authorList>
    </citation>
    <scope>NUCLEOTIDE SEQUENCE [GENOMIC DNA]</scope>
    <source>
        <strain>168</strain>
    </source>
</reference>
<reference key="2">
    <citation type="journal article" date="1997" name="Nature">
        <title>The complete genome sequence of the Gram-positive bacterium Bacillus subtilis.</title>
        <authorList>
            <person name="Kunst F."/>
            <person name="Ogasawara N."/>
            <person name="Moszer I."/>
            <person name="Albertini A.M."/>
            <person name="Alloni G."/>
            <person name="Azevedo V."/>
            <person name="Bertero M.G."/>
            <person name="Bessieres P."/>
            <person name="Bolotin A."/>
            <person name="Borchert S."/>
            <person name="Borriss R."/>
            <person name="Boursier L."/>
            <person name="Brans A."/>
            <person name="Braun M."/>
            <person name="Brignell S.C."/>
            <person name="Bron S."/>
            <person name="Brouillet S."/>
            <person name="Bruschi C.V."/>
            <person name="Caldwell B."/>
            <person name="Capuano V."/>
            <person name="Carter N.M."/>
            <person name="Choi S.-K."/>
            <person name="Codani J.-J."/>
            <person name="Connerton I.F."/>
            <person name="Cummings N.J."/>
            <person name="Daniel R.A."/>
            <person name="Denizot F."/>
            <person name="Devine K.M."/>
            <person name="Duesterhoeft A."/>
            <person name="Ehrlich S.D."/>
            <person name="Emmerson P.T."/>
            <person name="Entian K.-D."/>
            <person name="Errington J."/>
            <person name="Fabret C."/>
            <person name="Ferrari E."/>
            <person name="Foulger D."/>
            <person name="Fritz C."/>
            <person name="Fujita M."/>
            <person name="Fujita Y."/>
            <person name="Fuma S."/>
            <person name="Galizzi A."/>
            <person name="Galleron N."/>
            <person name="Ghim S.-Y."/>
            <person name="Glaser P."/>
            <person name="Goffeau A."/>
            <person name="Golightly E.J."/>
            <person name="Grandi G."/>
            <person name="Guiseppi G."/>
            <person name="Guy B.J."/>
            <person name="Haga K."/>
            <person name="Haiech J."/>
            <person name="Harwood C.R."/>
            <person name="Henaut A."/>
            <person name="Hilbert H."/>
            <person name="Holsappel S."/>
            <person name="Hosono S."/>
            <person name="Hullo M.-F."/>
            <person name="Itaya M."/>
            <person name="Jones L.-M."/>
            <person name="Joris B."/>
            <person name="Karamata D."/>
            <person name="Kasahara Y."/>
            <person name="Klaerr-Blanchard M."/>
            <person name="Klein C."/>
            <person name="Kobayashi Y."/>
            <person name="Koetter P."/>
            <person name="Koningstein G."/>
            <person name="Krogh S."/>
            <person name="Kumano M."/>
            <person name="Kurita K."/>
            <person name="Lapidus A."/>
            <person name="Lardinois S."/>
            <person name="Lauber J."/>
            <person name="Lazarevic V."/>
            <person name="Lee S.-M."/>
            <person name="Levine A."/>
            <person name="Liu H."/>
            <person name="Masuda S."/>
            <person name="Mauel C."/>
            <person name="Medigue C."/>
            <person name="Medina N."/>
            <person name="Mellado R.P."/>
            <person name="Mizuno M."/>
            <person name="Moestl D."/>
            <person name="Nakai S."/>
            <person name="Noback M."/>
            <person name="Noone D."/>
            <person name="O'Reilly M."/>
            <person name="Ogawa K."/>
            <person name="Ogiwara A."/>
            <person name="Oudega B."/>
            <person name="Park S.-H."/>
            <person name="Parro V."/>
            <person name="Pohl T.M."/>
            <person name="Portetelle D."/>
            <person name="Porwollik S."/>
            <person name="Prescott A.M."/>
            <person name="Presecan E."/>
            <person name="Pujic P."/>
            <person name="Purnelle B."/>
            <person name="Rapoport G."/>
            <person name="Rey M."/>
            <person name="Reynolds S."/>
            <person name="Rieger M."/>
            <person name="Rivolta C."/>
            <person name="Rocha E."/>
            <person name="Roche B."/>
            <person name="Rose M."/>
            <person name="Sadaie Y."/>
            <person name="Sato T."/>
            <person name="Scanlan E."/>
            <person name="Schleich S."/>
            <person name="Schroeter R."/>
            <person name="Scoffone F."/>
            <person name="Sekiguchi J."/>
            <person name="Sekowska A."/>
            <person name="Seror S.J."/>
            <person name="Serror P."/>
            <person name="Shin B.-S."/>
            <person name="Soldo B."/>
            <person name="Sorokin A."/>
            <person name="Tacconi E."/>
            <person name="Takagi T."/>
            <person name="Takahashi H."/>
            <person name="Takemaru K."/>
            <person name="Takeuchi M."/>
            <person name="Tamakoshi A."/>
            <person name="Tanaka T."/>
            <person name="Terpstra P."/>
            <person name="Tognoni A."/>
            <person name="Tosato V."/>
            <person name="Uchiyama S."/>
            <person name="Vandenbol M."/>
            <person name="Vannier F."/>
            <person name="Vassarotti A."/>
            <person name="Viari A."/>
            <person name="Wambutt R."/>
            <person name="Wedler E."/>
            <person name="Wedler H."/>
            <person name="Weitzenegger T."/>
            <person name="Winters P."/>
            <person name="Wipat A."/>
            <person name="Yamamoto H."/>
            <person name="Yamane K."/>
            <person name="Yasumoto K."/>
            <person name="Yata K."/>
            <person name="Yoshida K."/>
            <person name="Yoshikawa H.-F."/>
            <person name="Zumstein E."/>
            <person name="Yoshikawa H."/>
            <person name="Danchin A."/>
        </authorList>
    </citation>
    <scope>NUCLEOTIDE SEQUENCE [LARGE SCALE GENOMIC DNA]</scope>
    <source>
        <strain>168</strain>
    </source>
</reference>